<protein>
    <recommendedName>
        <fullName evidence="1">UDP-N-acetylmuramoylalanine--D-glutamate ligase</fullName>
        <ecNumber evidence="1">6.3.2.9</ecNumber>
    </recommendedName>
    <alternativeName>
        <fullName evidence="1">D-glutamic acid-adding enzyme</fullName>
    </alternativeName>
    <alternativeName>
        <fullName evidence="1">UDP-N-acetylmuramoyl-L-alanyl-D-glutamate synthetase</fullName>
    </alternativeName>
</protein>
<gene>
    <name evidence="1" type="primary">murD</name>
    <name type="ordered locus">Ppha_2896</name>
</gene>
<feature type="chain" id="PRO_1000130869" description="UDP-N-acetylmuramoylalanine--D-glutamate ligase">
    <location>
        <begin position="1"/>
        <end position="464"/>
    </location>
</feature>
<feature type="binding site" evidence="1">
    <location>
        <begin position="112"/>
        <end position="118"/>
    </location>
    <ligand>
        <name>ATP</name>
        <dbReference type="ChEBI" id="CHEBI:30616"/>
    </ligand>
</feature>
<keyword id="KW-0067">ATP-binding</keyword>
<keyword id="KW-0131">Cell cycle</keyword>
<keyword id="KW-0132">Cell division</keyword>
<keyword id="KW-0133">Cell shape</keyword>
<keyword id="KW-0961">Cell wall biogenesis/degradation</keyword>
<keyword id="KW-0963">Cytoplasm</keyword>
<keyword id="KW-0436">Ligase</keyword>
<keyword id="KW-0547">Nucleotide-binding</keyword>
<keyword id="KW-0573">Peptidoglycan synthesis</keyword>
<keyword id="KW-1185">Reference proteome</keyword>
<evidence type="ECO:0000255" key="1">
    <source>
        <dbReference type="HAMAP-Rule" id="MF_00639"/>
    </source>
</evidence>
<proteinExistence type="inferred from homology"/>
<reference key="1">
    <citation type="submission" date="2008-06" db="EMBL/GenBank/DDBJ databases">
        <title>Complete sequence of Pelodictyon phaeoclathratiforme BU-1.</title>
        <authorList>
            <consortium name="US DOE Joint Genome Institute"/>
            <person name="Lucas S."/>
            <person name="Copeland A."/>
            <person name="Lapidus A."/>
            <person name="Glavina del Rio T."/>
            <person name="Dalin E."/>
            <person name="Tice H."/>
            <person name="Bruce D."/>
            <person name="Goodwin L."/>
            <person name="Pitluck S."/>
            <person name="Schmutz J."/>
            <person name="Larimer F."/>
            <person name="Land M."/>
            <person name="Hauser L."/>
            <person name="Kyrpides N."/>
            <person name="Mikhailova N."/>
            <person name="Liu Z."/>
            <person name="Li T."/>
            <person name="Zhao F."/>
            <person name="Overmann J."/>
            <person name="Bryant D.A."/>
            <person name="Richardson P."/>
        </authorList>
    </citation>
    <scope>NUCLEOTIDE SEQUENCE [LARGE SCALE GENOMIC DNA]</scope>
    <source>
        <strain>DSM 5477 / BU-1</strain>
    </source>
</reference>
<dbReference type="EC" id="6.3.2.9" evidence="1"/>
<dbReference type="EMBL" id="CP001110">
    <property type="protein sequence ID" value="ACF45039.1"/>
    <property type="molecule type" value="Genomic_DNA"/>
</dbReference>
<dbReference type="RefSeq" id="WP_012509507.1">
    <property type="nucleotide sequence ID" value="NC_011060.1"/>
</dbReference>
<dbReference type="SMR" id="B4SHE6"/>
<dbReference type="STRING" id="324925.Ppha_2896"/>
<dbReference type="KEGG" id="pph:Ppha_2896"/>
<dbReference type="eggNOG" id="COG0771">
    <property type="taxonomic scope" value="Bacteria"/>
</dbReference>
<dbReference type="HOGENOM" id="CLU_032540_0_0_10"/>
<dbReference type="OrthoDB" id="9809796at2"/>
<dbReference type="UniPathway" id="UPA00219"/>
<dbReference type="Proteomes" id="UP000002724">
    <property type="component" value="Chromosome"/>
</dbReference>
<dbReference type="GO" id="GO:0005737">
    <property type="term" value="C:cytoplasm"/>
    <property type="evidence" value="ECO:0007669"/>
    <property type="project" value="UniProtKB-SubCell"/>
</dbReference>
<dbReference type="GO" id="GO:0005524">
    <property type="term" value="F:ATP binding"/>
    <property type="evidence" value="ECO:0007669"/>
    <property type="project" value="UniProtKB-UniRule"/>
</dbReference>
<dbReference type="GO" id="GO:0008764">
    <property type="term" value="F:UDP-N-acetylmuramoylalanine-D-glutamate ligase activity"/>
    <property type="evidence" value="ECO:0007669"/>
    <property type="project" value="UniProtKB-UniRule"/>
</dbReference>
<dbReference type="GO" id="GO:0051301">
    <property type="term" value="P:cell division"/>
    <property type="evidence" value="ECO:0007669"/>
    <property type="project" value="UniProtKB-KW"/>
</dbReference>
<dbReference type="GO" id="GO:0071555">
    <property type="term" value="P:cell wall organization"/>
    <property type="evidence" value="ECO:0007669"/>
    <property type="project" value="UniProtKB-KW"/>
</dbReference>
<dbReference type="GO" id="GO:0009252">
    <property type="term" value="P:peptidoglycan biosynthetic process"/>
    <property type="evidence" value="ECO:0007669"/>
    <property type="project" value="UniProtKB-UniRule"/>
</dbReference>
<dbReference type="GO" id="GO:0008360">
    <property type="term" value="P:regulation of cell shape"/>
    <property type="evidence" value="ECO:0007669"/>
    <property type="project" value="UniProtKB-KW"/>
</dbReference>
<dbReference type="Gene3D" id="3.90.190.20">
    <property type="entry name" value="Mur ligase, C-terminal domain"/>
    <property type="match status" value="1"/>
</dbReference>
<dbReference type="Gene3D" id="3.40.1190.10">
    <property type="entry name" value="Mur-like, catalytic domain"/>
    <property type="match status" value="1"/>
</dbReference>
<dbReference type="Gene3D" id="3.40.50.720">
    <property type="entry name" value="NAD(P)-binding Rossmann-like Domain"/>
    <property type="match status" value="1"/>
</dbReference>
<dbReference type="HAMAP" id="MF_00639">
    <property type="entry name" value="MurD"/>
    <property type="match status" value="1"/>
</dbReference>
<dbReference type="InterPro" id="IPR036565">
    <property type="entry name" value="Mur-like_cat_sf"/>
</dbReference>
<dbReference type="InterPro" id="IPR004101">
    <property type="entry name" value="Mur_ligase_C"/>
</dbReference>
<dbReference type="InterPro" id="IPR036615">
    <property type="entry name" value="Mur_ligase_C_dom_sf"/>
</dbReference>
<dbReference type="InterPro" id="IPR013221">
    <property type="entry name" value="Mur_ligase_cen"/>
</dbReference>
<dbReference type="InterPro" id="IPR005762">
    <property type="entry name" value="MurD"/>
</dbReference>
<dbReference type="NCBIfam" id="TIGR01087">
    <property type="entry name" value="murD"/>
    <property type="match status" value="1"/>
</dbReference>
<dbReference type="PANTHER" id="PTHR43692">
    <property type="entry name" value="UDP-N-ACETYLMURAMOYLALANINE--D-GLUTAMATE LIGASE"/>
    <property type="match status" value="1"/>
</dbReference>
<dbReference type="PANTHER" id="PTHR43692:SF1">
    <property type="entry name" value="UDP-N-ACETYLMURAMOYLALANINE--D-GLUTAMATE LIGASE"/>
    <property type="match status" value="1"/>
</dbReference>
<dbReference type="Pfam" id="PF02875">
    <property type="entry name" value="Mur_ligase_C"/>
    <property type="match status" value="1"/>
</dbReference>
<dbReference type="Pfam" id="PF08245">
    <property type="entry name" value="Mur_ligase_M"/>
    <property type="match status" value="1"/>
</dbReference>
<dbReference type="Pfam" id="PF21377">
    <property type="entry name" value="MurD_N"/>
    <property type="match status" value="1"/>
</dbReference>
<dbReference type="PRINTS" id="PR00420">
    <property type="entry name" value="RNGMNOXGNASE"/>
</dbReference>
<dbReference type="SUPFAM" id="SSF51984">
    <property type="entry name" value="MurCD N-terminal domain"/>
    <property type="match status" value="1"/>
</dbReference>
<dbReference type="SUPFAM" id="SSF53623">
    <property type="entry name" value="MurD-like peptide ligases, catalytic domain"/>
    <property type="match status" value="1"/>
</dbReference>
<dbReference type="SUPFAM" id="SSF53244">
    <property type="entry name" value="MurD-like peptide ligases, peptide-binding domain"/>
    <property type="match status" value="1"/>
</dbReference>
<comment type="function">
    <text evidence="1">Cell wall formation. Catalyzes the addition of glutamate to the nucleotide precursor UDP-N-acetylmuramoyl-L-alanine (UMA).</text>
</comment>
<comment type="catalytic activity">
    <reaction evidence="1">
        <text>UDP-N-acetyl-alpha-D-muramoyl-L-alanine + D-glutamate + ATP = UDP-N-acetyl-alpha-D-muramoyl-L-alanyl-D-glutamate + ADP + phosphate + H(+)</text>
        <dbReference type="Rhea" id="RHEA:16429"/>
        <dbReference type="ChEBI" id="CHEBI:15378"/>
        <dbReference type="ChEBI" id="CHEBI:29986"/>
        <dbReference type="ChEBI" id="CHEBI:30616"/>
        <dbReference type="ChEBI" id="CHEBI:43474"/>
        <dbReference type="ChEBI" id="CHEBI:83898"/>
        <dbReference type="ChEBI" id="CHEBI:83900"/>
        <dbReference type="ChEBI" id="CHEBI:456216"/>
        <dbReference type="EC" id="6.3.2.9"/>
    </reaction>
</comment>
<comment type="pathway">
    <text evidence="1">Cell wall biogenesis; peptidoglycan biosynthesis.</text>
</comment>
<comment type="subcellular location">
    <subcellularLocation>
        <location evidence="1">Cytoplasm</location>
    </subcellularLocation>
</comment>
<comment type="similarity">
    <text evidence="1">Belongs to the MurCDEF family.</text>
</comment>
<accession>B4SHE6</accession>
<organism>
    <name type="scientific">Pelodictyon phaeoclathratiforme (strain DSM 5477 / BU-1)</name>
    <dbReference type="NCBI Taxonomy" id="324925"/>
    <lineage>
        <taxon>Bacteria</taxon>
        <taxon>Pseudomonadati</taxon>
        <taxon>Chlorobiota</taxon>
        <taxon>Chlorobiia</taxon>
        <taxon>Chlorobiales</taxon>
        <taxon>Chlorobiaceae</taxon>
        <taxon>Chlorobium/Pelodictyon group</taxon>
        <taxon>Pelodictyon</taxon>
    </lineage>
</organism>
<sequence length="464" mass="50271">MDLKGKRVSVIGAGKSGIAAAQLLARKGATVFVSELGTMGAEEMQHLREMQIPFEEAGHSPAVYEADFCVISPGIPPHAEVVTTLQARNIPLYSEIELASRFCKARIVGITGTDGKTTTSTLVHALCEEDGLRNGYRAYSVGNIGVPFSSMVLDMKAGDIAVVELSSYQLERSPTLKPEVAVIMNITPDHLDRYAGELQGYAAAKFRIYANQGAGDTLIYNEDDALLREHFACRDQFPFNIMSFGMEPACKGVPDIRTFFLEGDTLVAHTPDGDEPVLVTSDFLKKSFRGRHNISNVLAAVAVAGALGIQREVVCQVIREFRGVEHRQEFVMTINGVDWVNDSKATNMNALRQALEALPATAVLIAGGRDKGNDYAAITRLVEKKVSLLIALGESQDKIVSAFKDVVAVKAAGSLEDAVLLARDAASSGQTVLFSPGCASFDMFKNFEDRGMQFKQCVHQLSSW</sequence>
<name>MURD_PELPB</name>